<organism>
    <name type="scientific">Homo sapiens</name>
    <name type="common">Human</name>
    <dbReference type="NCBI Taxonomy" id="9606"/>
    <lineage>
        <taxon>Eukaryota</taxon>
        <taxon>Metazoa</taxon>
        <taxon>Chordata</taxon>
        <taxon>Craniata</taxon>
        <taxon>Vertebrata</taxon>
        <taxon>Euteleostomi</taxon>
        <taxon>Mammalia</taxon>
        <taxon>Eutheria</taxon>
        <taxon>Euarchontoglires</taxon>
        <taxon>Primates</taxon>
        <taxon>Haplorrhini</taxon>
        <taxon>Catarrhini</taxon>
        <taxon>Hominidae</taxon>
        <taxon>Homo</taxon>
    </lineage>
</organism>
<accession>A6NGK3</accession>
<comment type="interaction">
    <interactant intactId="EBI-12281306">
        <id>A6NGK3</id>
    </interactant>
    <interactant intactId="EBI-2548508">
        <id>Q96IK5</id>
        <label>GMCL1</label>
    </interactant>
    <organismsDiffer>false</organismsDiffer>
    <experiments>4</experiments>
</comment>
<comment type="miscellaneous">
    <text>This gene belongs to a multigene family expressed in a large variety of tumors whereas in normal tissues, expression is restricted to germ cells. These genes organized in clustered repeats, have a high degree of predicted sequence identity, but differ by scattered single nucleotide substitution. Their sequences contain either the antigenic peptide YYWPRPRRY or YRPRPRRY which is recognized by cytotoxic T-cells.</text>
</comment>
<comment type="similarity">
    <text evidence="2">Belongs to the GAGE family.</text>
</comment>
<comment type="caution">
    <text evidence="2">The first GAGE nomenclature was based on identified mRNA sequences, but the high identity of the GAGE members made impossible to separate products of paralogous genes from polymorph products. PubMed:18179644 presented a new GAGE gene nomenclature based on the identified genes and their products.</text>
</comment>
<dbReference type="EMBL" id="AF235097">
    <property type="status" value="NOT_ANNOTATED_CDS"/>
    <property type="molecule type" value="Genomic_DNA"/>
</dbReference>
<dbReference type="CCDS" id="CCDS78483.1"/>
<dbReference type="RefSeq" id="NP_001091883.3">
    <property type="nucleotide sequence ID" value="NM_001098413.4"/>
</dbReference>
<dbReference type="IntAct" id="A6NGK3">
    <property type="interactions" value="1"/>
</dbReference>
<dbReference type="STRING" id="9606.ENSP00000385415"/>
<dbReference type="iPTMnet" id="A6NGK3"/>
<dbReference type="PhosphoSitePlus" id="A6NGK3"/>
<dbReference type="BioMuta" id="GAGE10"/>
<dbReference type="jPOST" id="A6NGK3"/>
<dbReference type="MassIVE" id="A6NGK3"/>
<dbReference type="PaxDb" id="9606-ENSP00000385415"/>
<dbReference type="PeptideAtlas" id="A6NGK3"/>
<dbReference type="DNASU" id="643832"/>
<dbReference type="Ensembl" id="ENST00000407599.4">
    <property type="protein sequence ID" value="ENSP00000385415.3"/>
    <property type="gene ID" value="ENSG00000215274.6"/>
</dbReference>
<dbReference type="GeneID" id="102724473"/>
<dbReference type="KEGG" id="hsa:102724473"/>
<dbReference type="MANE-Select" id="ENST00000407599.4">
    <property type="protein sequence ID" value="ENSP00000385415.3"/>
    <property type="RefSeq nucleotide sequence ID" value="NM_001098413.4"/>
    <property type="RefSeq protein sequence ID" value="NP_001091883.3"/>
</dbReference>
<dbReference type="UCSC" id="uc033ede.2">
    <property type="organism name" value="human"/>
</dbReference>
<dbReference type="AGR" id="HGNC:30968"/>
<dbReference type="CTD" id="102724473"/>
<dbReference type="DisGeNET" id="102724473"/>
<dbReference type="GeneCards" id="GAGE10"/>
<dbReference type="HGNC" id="HGNC:30968">
    <property type="gene designation" value="GAGE10"/>
</dbReference>
<dbReference type="HPA" id="ENSG00000215274">
    <property type="expression patterns" value="Tissue enhanced (testis)"/>
</dbReference>
<dbReference type="MIM" id="300737">
    <property type="type" value="gene"/>
</dbReference>
<dbReference type="neXtProt" id="NX_A6NGK3"/>
<dbReference type="OpenTargets" id="ENSG00000215274"/>
<dbReference type="PharmGKB" id="PA145148765"/>
<dbReference type="VEuPathDB" id="HostDB:ENSG00000215274"/>
<dbReference type="eggNOG" id="ENOG502SZ68">
    <property type="taxonomic scope" value="Eukaryota"/>
</dbReference>
<dbReference type="GeneTree" id="ENSGT00940000153097"/>
<dbReference type="HOGENOM" id="CLU_150116_0_0_1"/>
<dbReference type="InParanoid" id="A6NGK3"/>
<dbReference type="OMA" id="QSIWHAD"/>
<dbReference type="OrthoDB" id="9539459at2759"/>
<dbReference type="PAN-GO" id="A6NGK3">
    <property type="GO annotations" value="0 GO annotations based on evolutionary models"/>
</dbReference>
<dbReference type="PhylomeDB" id="A6NGK3"/>
<dbReference type="TreeFam" id="TF340669"/>
<dbReference type="PathwayCommons" id="A6NGK3"/>
<dbReference type="SignaLink" id="A6NGK3"/>
<dbReference type="Pharos" id="A6NGK3">
    <property type="development level" value="Tdark"/>
</dbReference>
<dbReference type="PRO" id="PR:A6NGK3"/>
<dbReference type="Proteomes" id="UP000005640">
    <property type="component" value="Chromosome X"/>
</dbReference>
<dbReference type="RNAct" id="A6NGK3">
    <property type="molecule type" value="protein"/>
</dbReference>
<dbReference type="Bgee" id="ENSG00000215274">
    <property type="expression patterns" value="Expressed in male germ line stem cell (sensu Vertebrata) in testis and 83 other cell types or tissues"/>
</dbReference>
<dbReference type="InterPro" id="IPR031320">
    <property type="entry name" value="GAGE"/>
</dbReference>
<dbReference type="InterPro" id="IPR008625">
    <property type="entry name" value="GAGE_fam"/>
</dbReference>
<dbReference type="PANTHER" id="PTHR14047:SF30">
    <property type="entry name" value="G ANTIGEN 1-RELATED"/>
    <property type="match status" value="1"/>
</dbReference>
<dbReference type="PANTHER" id="PTHR14047">
    <property type="entry name" value="P ANTIGEN FAMILY MEMBER 5-RELATED"/>
    <property type="match status" value="1"/>
</dbReference>
<dbReference type="Pfam" id="PF05831">
    <property type="entry name" value="GAGE"/>
    <property type="match status" value="1"/>
</dbReference>
<dbReference type="SMART" id="SM01379">
    <property type="entry name" value="GAGE"/>
    <property type="match status" value="1"/>
</dbReference>
<protein>
    <recommendedName>
        <fullName>G antigen 10</fullName>
        <shortName>GAGE-10</shortName>
    </recommendedName>
</protein>
<feature type="chain" id="PRO_0000337202" description="G antigen 10">
    <location>
        <begin position="1"/>
        <end position="116"/>
    </location>
</feature>
<feature type="region of interest" description="Disordered" evidence="1">
    <location>
        <begin position="1"/>
        <end position="116"/>
    </location>
</feature>
<feature type="compositionally biased region" description="Acidic residues" evidence="1">
    <location>
        <begin position="31"/>
        <end position="44"/>
    </location>
</feature>
<feature type="compositionally biased region" description="Basic and acidic residues" evidence="1">
    <location>
        <begin position="71"/>
        <end position="80"/>
    </location>
</feature>
<feature type="compositionally biased region" description="Basic and acidic residues" evidence="1">
    <location>
        <begin position="102"/>
        <end position="116"/>
    </location>
</feature>
<feature type="sequence variant" id="VAR_085737" description="In dbSNP:rs782631403.">
    <original>P</original>
    <variation>S</variation>
    <location>
        <position position="11"/>
    </location>
</feature>
<feature type="sequence variant" id="VAR_085738" description="In dbSNP:rs782469432.">
    <original>R</original>
    <variation>L</variation>
    <location>
        <position position="15"/>
    </location>
</feature>
<keyword id="KW-1267">Proteomics identification</keyword>
<keyword id="KW-1185">Reference proteome</keyword>
<name>GAG10_HUMAN</name>
<proteinExistence type="evidence at protein level"/>
<evidence type="ECO:0000256" key="1">
    <source>
        <dbReference type="SAM" id="MobiDB-lite"/>
    </source>
</evidence>
<evidence type="ECO:0000305" key="2"/>
<sequence>MSWRGRSTYRPRPRRYVEPPEMIGPMLPEQFSDEVEPATPEEGEPATQRQDPAAAQEGEDEGASAGQGPKPEADSQEQVHPKTGCECGDGPDGQEMGLPNPEEVKRPEEGEKQSQC</sequence>
<reference key="1">
    <citation type="journal article" date="2005" name="Nature">
        <title>The DNA sequence of the human X chromosome.</title>
        <authorList>
            <person name="Ross M.T."/>
            <person name="Grafham D.V."/>
            <person name="Coffey A.J."/>
            <person name="Scherer S."/>
            <person name="McLay K."/>
            <person name="Muzny D."/>
            <person name="Platzer M."/>
            <person name="Howell G.R."/>
            <person name="Burrows C."/>
            <person name="Bird C.P."/>
            <person name="Frankish A."/>
            <person name="Lovell F.L."/>
            <person name="Howe K.L."/>
            <person name="Ashurst J.L."/>
            <person name="Fulton R.S."/>
            <person name="Sudbrak R."/>
            <person name="Wen G."/>
            <person name="Jones M.C."/>
            <person name="Hurles M.E."/>
            <person name="Andrews T.D."/>
            <person name="Scott C.E."/>
            <person name="Searle S."/>
            <person name="Ramser J."/>
            <person name="Whittaker A."/>
            <person name="Deadman R."/>
            <person name="Carter N.P."/>
            <person name="Hunt S.E."/>
            <person name="Chen R."/>
            <person name="Cree A."/>
            <person name="Gunaratne P."/>
            <person name="Havlak P."/>
            <person name="Hodgson A."/>
            <person name="Metzker M.L."/>
            <person name="Richards S."/>
            <person name="Scott G."/>
            <person name="Steffen D."/>
            <person name="Sodergren E."/>
            <person name="Wheeler D.A."/>
            <person name="Worley K.C."/>
            <person name="Ainscough R."/>
            <person name="Ambrose K.D."/>
            <person name="Ansari-Lari M.A."/>
            <person name="Aradhya S."/>
            <person name="Ashwell R.I."/>
            <person name="Babbage A.K."/>
            <person name="Bagguley C.L."/>
            <person name="Ballabio A."/>
            <person name="Banerjee R."/>
            <person name="Barker G.E."/>
            <person name="Barlow K.F."/>
            <person name="Barrett I.P."/>
            <person name="Bates K.N."/>
            <person name="Beare D.M."/>
            <person name="Beasley H."/>
            <person name="Beasley O."/>
            <person name="Beck A."/>
            <person name="Bethel G."/>
            <person name="Blechschmidt K."/>
            <person name="Brady N."/>
            <person name="Bray-Allen S."/>
            <person name="Bridgeman A.M."/>
            <person name="Brown A.J."/>
            <person name="Brown M.J."/>
            <person name="Bonnin D."/>
            <person name="Bruford E.A."/>
            <person name="Buhay C."/>
            <person name="Burch P."/>
            <person name="Burford D."/>
            <person name="Burgess J."/>
            <person name="Burrill W."/>
            <person name="Burton J."/>
            <person name="Bye J.M."/>
            <person name="Carder C."/>
            <person name="Carrel L."/>
            <person name="Chako J."/>
            <person name="Chapman J.C."/>
            <person name="Chavez D."/>
            <person name="Chen E."/>
            <person name="Chen G."/>
            <person name="Chen Y."/>
            <person name="Chen Z."/>
            <person name="Chinault C."/>
            <person name="Ciccodicola A."/>
            <person name="Clark S.Y."/>
            <person name="Clarke G."/>
            <person name="Clee C.M."/>
            <person name="Clegg S."/>
            <person name="Clerc-Blankenburg K."/>
            <person name="Clifford K."/>
            <person name="Cobley V."/>
            <person name="Cole C.G."/>
            <person name="Conquer J.S."/>
            <person name="Corby N."/>
            <person name="Connor R.E."/>
            <person name="David R."/>
            <person name="Davies J."/>
            <person name="Davis C."/>
            <person name="Davis J."/>
            <person name="Delgado O."/>
            <person name="Deshazo D."/>
            <person name="Dhami P."/>
            <person name="Ding Y."/>
            <person name="Dinh H."/>
            <person name="Dodsworth S."/>
            <person name="Draper H."/>
            <person name="Dugan-Rocha S."/>
            <person name="Dunham A."/>
            <person name="Dunn M."/>
            <person name="Durbin K.J."/>
            <person name="Dutta I."/>
            <person name="Eades T."/>
            <person name="Ellwood M."/>
            <person name="Emery-Cohen A."/>
            <person name="Errington H."/>
            <person name="Evans K.L."/>
            <person name="Faulkner L."/>
            <person name="Francis F."/>
            <person name="Frankland J."/>
            <person name="Fraser A.E."/>
            <person name="Galgoczy P."/>
            <person name="Gilbert J."/>
            <person name="Gill R."/>
            <person name="Gloeckner G."/>
            <person name="Gregory S.G."/>
            <person name="Gribble S."/>
            <person name="Griffiths C."/>
            <person name="Grocock R."/>
            <person name="Gu Y."/>
            <person name="Gwilliam R."/>
            <person name="Hamilton C."/>
            <person name="Hart E.A."/>
            <person name="Hawes A."/>
            <person name="Heath P.D."/>
            <person name="Heitmann K."/>
            <person name="Hennig S."/>
            <person name="Hernandez J."/>
            <person name="Hinzmann B."/>
            <person name="Ho S."/>
            <person name="Hoffs M."/>
            <person name="Howden P.J."/>
            <person name="Huckle E.J."/>
            <person name="Hume J."/>
            <person name="Hunt P.J."/>
            <person name="Hunt A.R."/>
            <person name="Isherwood J."/>
            <person name="Jacob L."/>
            <person name="Johnson D."/>
            <person name="Jones S."/>
            <person name="de Jong P.J."/>
            <person name="Joseph S.S."/>
            <person name="Keenan S."/>
            <person name="Kelly S."/>
            <person name="Kershaw J.K."/>
            <person name="Khan Z."/>
            <person name="Kioschis P."/>
            <person name="Klages S."/>
            <person name="Knights A.J."/>
            <person name="Kosiura A."/>
            <person name="Kovar-Smith C."/>
            <person name="Laird G.K."/>
            <person name="Langford C."/>
            <person name="Lawlor S."/>
            <person name="Leversha M."/>
            <person name="Lewis L."/>
            <person name="Liu W."/>
            <person name="Lloyd C."/>
            <person name="Lloyd D.M."/>
            <person name="Loulseged H."/>
            <person name="Loveland J.E."/>
            <person name="Lovell J.D."/>
            <person name="Lozado R."/>
            <person name="Lu J."/>
            <person name="Lyne R."/>
            <person name="Ma J."/>
            <person name="Maheshwari M."/>
            <person name="Matthews L.H."/>
            <person name="McDowall J."/>
            <person name="McLaren S."/>
            <person name="McMurray A."/>
            <person name="Meidl P."/>
            <person name="Meitinger T."/>
            <person name="Milne S."/>
            <person name="Miner G."/>
            <person name="Mistry S.L."/>
            <person name="Morgan M."/>
            <person name="Morris S."/>
            <person name="Mueller I."/>
            <person name="Mullikin J.C."/>
            <person name="Nguyen N."/>
            <person name="Nordsiek G."/>
            <person name="Nyakatura G."/>
            <person name="O'dell C.N."/>
            <person name="Okwuonu G."/>
            <person name="Palmer S."/>
            <person name="Pandian R."/>
            <person name="Parker D."/>
            <person name="Parrish J."/>
            <person name="Pasternak S."/>
            <person name="Patel D."/>
            <person name="Pearce A.V."/>
            <person name="Pearson D.M."/>
            <person name="Pelan S.E."/>
            <person name="Perez L."/>
            <person name="Porter K.M."/>
            <person name="Ramsey Y."/>
            <person name="Reichwald K."/>
            <person name="Rhodes S."/>
            <person name="Ridler K.A."/>
            <person name="Schlessinger D."/>
            <person name="Schueler M.G."/>
            <person name="Sehra H.K."/>
            <person name="Shaw-Smith C."/>
            <person name="Shen H."/>
            <person name="Sheridan E.M."/>
            <person name="Shownkeen R."/>
            <person name="Skuce C.D."/>
            <person name="Smith M.L."/>
            <person name="Sotheran E.C."/>
            <person name="Steingruber H.E."/>
            <person name="Steward C.A."/>
            <person name="Storey R."/>
            <person name="Swann R.M."/>
            <person name="Swarbreck D."/>
            <person name="Tabor P.E."/>
            <person name="Taudien S."/>
            <person name="Taylor T."/>
            <person name="Teague B."/>
            <person name="Thomas K."/>
            <person name="Thorpe A."/>
            <person name="Timms K."/>
            <person name="Tracey A."/>
            <person name="Trevanion S."/>
            <person name="Tromans A.C."/>
            <person name="d'Urso M."/>
            <person name="Verduzco D."/>
            <person name="Villasana D."/>
            <person name="Waldron L."/>
            <person name="Wall M."/>
            <person name="Wang Q."/>
            <person name="Warren J."/>
            <person name="Warry G.L."/>
            <person name="Wei X."/>
            <person name="West A."/>
            <person name="Whitehead S.L."/>
            <person name="Whiteley M.N."/>
            <person name="Wilkinson J.E."/>
            <person name="Willey D.L."/>
            <person name="Williams G."/>
            <person name="Williams L."/>
            <person name="Williamson A."/>
            <person name="Williamson H."/>
            <person name="Wilming L."/>
            <person name="Woodmansey R.L."/>
            <person name="Wray P.W."/>
            <person name="Yen J."/>
            <person name="Zhang J."/>
            <person name="Zhou J."/>
            <person name="Zoghbi H."/>
            <person name="Zorilla S."/>
            <person name="Buck D."/>
            <person name="Reinhardt R."/>
            <person name="Poustka A."/>
            <person name="Rosenthal A."/>
            <person name="Lehrach H."/>
            <person name="Meindl A."/>
            <person name="Minx P.J."/>
            <person name="Hillier L.W."/>
            <person name="Willard H.F."/>
            <person name="Wilson R.K."/>
            <person name="Waterston R.H."/>
            <person name="Rice C.M."/>
            <person name="Vaudin M."/>
            <person name="Coulson A."/>
            <person name="Nelson D.L."/>
            <person name="Weinstock G."/>
            <person name="Sulston J.E."/>
            <person name="Durbin R.M."/>
            <person name="Hubbard T."/>
            <person name="Gibbs R.A."/>
            <person name="Beck S."/>
            <person name="Rogers J."/>
            <person name="Bentley D.R."/>
        </authorList>
    </citation>
    <scope>NUCLEOTIDE SEQUENCE [LARGE SCALE GENOMIC DNA]</scope>
</reference>
<reference key="2">
    <citation type="journal article" date="2008" name="Tissue Antigens">
        <title>An overview of the GAGE cancer/testis antigen family with the inclusion of newly identified members.</title>
        <authorList>
            <person name="Gjerstorff M.F."/>
            <person name="Ditzel H.J."/>
        </authorList>
    </citation>
    <scope>GAGE FAMILY</scope>
</reference>
<gene>
    <name type="primary">GAGE10</name>
</gene>